<sequence length="154" mass="17926">MHCPFCGAHDTKVIDSRLVAEGDQVRRRRECLACGERFTTFETAELVMPRLIKQDGSRQPFDEDKLRAGMQRALEKRPVSVERLEAAIGHIKHQLRATGEREIKSRVLGELVMAELQKLDEVAYIRFASVYRRFQDLNEFREEIERLAREPAKE</sequence>
<name>NRDR_PSEAB</name>
<reference key="1">
    <citation type="journal article" date="2006" name="Genome Biol.">
        <title>Genomic analysis reveals that Pseudomonas aeruginosa virulence is combinatorial.</title>
        <authorList>
            <person name="Lee D.G."/>
            <person name="Urbach J.M."/>
            <person name="Wu G."/>
            <person name="Liberati N.T."/>
            <person name="Feinbaum R.L."/>
            <person name="Miyata S."/>
            <person name="Diggins L.T."/>
            <person name="He J."/>
            <person name="Saucier M."/>
            <person name="Deziel E."/>
            <person name="Friedman L."/>
            <person name="Li L."/>
            <person name="Grills G."/>
            <person name="Montgomery K."/>
            <person name="Kucherlapati R."/>
            <person name="Rahme L.G."/>
            <person name="Ausubel F.M."/>
        </authorList>
    </citation>
    <scope>NUCLEOTIDE SEQUENCE [LARGE SCALE GENOMIC DNA]</scope>
    <source>
        <strain>UCBPP-PA14</strain>
    </source>
</reference>
<accession>Q02SM4</accession>
<feature type="chain" id="PRO_1000080801" description="Transcriptional repressor NrdR">
    <location>
        <begin position="1"/>
        <end position="154"/>
    </location>
</feature>
<feature type="domain" description="ATP-cone" evidence="1">
    <location>
        <begin position="49"/>
        <end position="139"/>
    </location>
</feature>
<feature type="zinc finger region" evidence="1">
    <location>
        <begin position="3"/>
        <end position="34"/>
    </location>
</feature>
<organism>
    <name type="scientific">Pseudomonas aeruginosa (strain UCBPP-PA14)</name>
    <dbReference type="NCBI Taxonomy" id="208963"/>
    <lineage>
        <taxon>Bacteria</taxon>
        <taxon>Pseudomonadati</taxon>
        <taxon>Pseudomonadota</taxon>
        <taxon>Gammaproteobacteria</taxon>
        <taxon>Pseudomonadales</taxon>
        <taxon>Pseudomonadaceae</taxon>
        <taxon>Pseudomonas</taxon>
    </lineage>
</organism>
<comment type="function">
    <text evidence="1">Negatively regulates transcription of bacterial ribonucleotide reductase nrd genes and operons by binding to NrdR-boxes.</text>
</comment>
<comment type="cofactor">
    <cofactor evidence="1">
        <name>Zn(2+)</name>
        <dbReference type="ChEBI" id="CHEBI:29105"/>
    </cofactor>
    <text evidence="1">Binds 1 zinc ion.</text>
</comment>
<comment type="similarity">
    <text evidence="1">Belongs to the NrdR family.</text>
</comment>
<gene>
    <name evidence="1" type="primary">nrdR</name>
    <name type="ordered locus">PA14_11380</name>
</gene>
<evidence type="ECO:0000255" key="1">
    <source>
        <dbReference type="HAMAP-Rule" id="MF_00440"/>
    </source>
</evidence>
<dbReference type="EMBL" id="CP000438">
    <property type="protein sequence ID" value="ABJ13330.1"/>
    <property type="molecule type" value="Genomic_DNA"/>
</dbReference>
<dbReference type="RefSeq" id="WP_003107181.1">
    <property type="nucleotide sequence ID" value="NZ_CP034244.1"/>
</dbReference>
<dbReference type="SMR" id="Q02SM4"/>
<dbReference type="GeneID" id="77219392"/>
<dbReference type="KEGG" id="pau:PA14_11380"/>
<dbReference type="PseudoCAP" id="PA14_11380"/>
<dbReference type="HOGENOM" id="CLU_108412_0_0_6"/>
<dbReference type="BioCyc" id="PAER208963:G1G74-947-MONOMER"/>
<dbReference type="Proteomes" id="UP000000653">
    <property type="component" value="Chromosome"/>
</dbReference>
<dbReference type="GO" id="GO:0005524">
    <property type="term" value="F:ATP binding"/>
    <property type="evidence" value="ECO:0007669"/>
    <property type="project" value="UniProtKB-KW"/>
</dbReference>
<dbReference type="GO" id="GO:0003677">
    <property type="term" value="F:DNA binding"/>
    <property type="evidence" value="ECO:0007669"/>
    <property type="project" value="UniProtKB-KW"/>
</dbReference>
<dbReference type="GO" id="GO:0008270">
    <property type="term" value="F:zinc ion binding"/>
    <property type="evidence" value="ECO:0007669"/>
    <property type="project" value="UniProtKB-UniRule"/>
</dbReference>
<dbReference type="GO" id="GO:0045892">
    <property type="term" value="P:negative regulation of DNA-templated transcription"/>
    <property type="evidence" value="ECO:0007669"/>
    <property type="project" value="UniProtKB-UniRule"/>
</dbReference>
<dbReference type="HAMAP" id="MF_00440">
    <property type="entry name" value="NrdR"/>
    <property type="match status" value="1"/>
</dbReference>
<dbReference type="InterPro" id="IPR005144">
    <property type="entry name" value="ATP-cone_dom"/>
</dbReference>
<dbReference type="InterPro" id="IPR055173">
    <property type="entry name" value="NrdR-like_N"/>
</dbReference>
<dbReference type="InterPro" id="IPR003796">
    <property type="entry name" value="RNR_NrdR-like"/>
</dbReference>
<dbReference type="NCBIfam" id="TIGR00244">
    <property type="entry name" value="transcriptional regulator NrdR"/>
    <property type="match status" value="1"/>
</dbReference>
<dbReference type="PANTHER" id="PTHR30455">
    <property type="entry name" value="TRANSCRIPTIONAL REPRESSOR NRDR"/>
    <property type="match status" value="1"/>
</dbReference>
<dbReference type="PANTHER" id="PTHR30455:SF2">
    <property type="entry name" value="TRANSCRIPTIONAL REPRESSOR NRDR"/>
    <property type="match status" value="1"/>
</dbReference>
<dbReference type="Pfam" id="PF03477">
    <property type="entry name" value="ATP-cone"/>
    <property type="match status" value="1"/>
</dbReference>
<dbReference type="Pfam" id="PF22811">
    <property type="entry name" value="Zn_ribbon_NrdR"/>
    <property type="match status" value="1"/>
</dbReference>
<dbReference type="PROSITE" id="PS51161">
    <property type="entry name" value="ATP_CONE"/>
    <property type="match status" value="1"/>
</dbReference>
<protein>
    <recommendedName>
        <fullName evidence="1">Transcriptional repressor NrdR</fullName>
    </recommendedName>
</protein>
<proteinExistence type="inferred from homology"/>
<keyword id="KW-0067">ATP-binding</keyword>
<keyword id="KW-0238">DNA-binding</keyword>
<keyword id="KW-0479">Metal-binding</keyword>
<keyword id="KW-0547">Nucleotide-binding</keyword>
<keyword id="KW-0678">Repressor</keyword>
<keyword id="KW-0804">Transcription</keyword>
<keyword id="KW-0805">Transcription regulation</keyword>
<keyword id="KW-0862">Zinc</keyword>
<keyword id="KW-0863">Zinc-finger</keyword>